<name>HIS3_PARDP</name>
<gene>
    <name evidence="1" type="primary">hisI</name>
    <name type="ordered locus">Pden_4080</name>
</gene>
<accession>A1B9F2</accession>
<organism>
    <name type="scientific">Paracoccus denitrificans (strain Pd 1222)</name>
    <dbReference type="NCBI Taxonomy" id="318586"/>
    <lineage>
        <taxon>Bacteria</taxon>
        <taxon>Pseudomonadati</taxon>
        <taxon>Pseudomonadota</taxon>
        <taxon>Alphaproteobacteria</taxon>
        <taxon>Rhodobacterales</taxon>
        <taxon>Paracoccaceae</taxon>
        <taxon>Paracoccus</taxon>
    </lineage>
</organism>
<comment type="function">
    <text evidence="1">Catalyzes the hydrolysis of the adenine ring of phosphoribosyl-AMP.</text>
</comment>
<comment type="catalytic activity">
    <reaction evidence="1">
        <text>1-(5-phospho-beta-D-ribosyl)-5'-AMP + H2O = 1-(5-phospho-beta-D-ribosyl)-5-[(5-phospho-beta-D-ribosylamino)methylideneamino]imidazole-4-carboxamide</text>
        <dbReference type="Rhea" id="RHEA:20049"/>
        <dbReference type="ChEBI" id="CHEBI:15377"/>
        <dbReference type="ChEBI" id="CHEBI:58435"/>
        <dbReference type="ChEBI" id="CHEBI:59457"/>
        <dbReference type="EC" id="3.5.4.19"/>
    </reaction>
</comment>
<comment type="cofactor">
    <cofactor evidence="1">
        <name>Mg(2+)</name>
        <dbReference type="ChEBI" id="CHEBI:18420"/>
    </cofactor>
    <text evidence="1">Binds 1 Mg(2+) ion per subunit.</text>
</comment>
<comment type="cofactor">
    <cofactor evidence="1">
        <name>Zn(2+)</name>
        <dbReference type="ChEBI" id="CHEBI:29105"/>
    </cofactor>
    <text evidence="1">Binds 1 zinc ion per subunit.</text>
</comment>
<comment type="pathway">
    <text evidence="1">Amino-acid biosynthesis; L-histidine biosynthesis; L-histidine from 5-phospho-alpha-D-ribose 1-diphosphate: step 3/9.</text>
</comment>
<comment type="subunit">
    <text evidence="1">Homodimer.</text>
</comment>
<comment type="subcellular location">
    <subcellularLocation>
        <location evidence="1">Cytoplasm</location>
    </subcellularLocation>
</comment>
<comment type="similarity">
    <text evidence="1">Belongs to the PRA-CH family.</text>
</comment>
<protein>
    <recommendedName>
        <fullName evidence="1">Phosphoribosyl-AMP cyclohydrolase</fullName>
        <shortName evidence="1">PRA-CH</shortName>
        <ecNumber evidence="1">3.5.4.19</ecNumber>
    </recommendedName>
</protein>
<feature type="chain" id="PRO_0000319703" description="Phosphoribosyl-AMP cyclohydrolase">
    <location>
        <begin position="1"/>
        <end position="121"/>
    </location>
</feature>
<feature type="binding site" evidence="1">
    <location>
        <position position="76"/>
    </location>
    <ligand>
        <name>Mg(2+)</name>
        <dbReference type="ChEBI" id="CHEBI:18420"/>
    </ligand>
</feature>
<feature type="binding site" evidence="1">
    <location>
        <position position="77"/>
    </location>
    <ligand>
        <name>Zn(2+)</name>
        <dbReference type="ChEBI" id="CHEBI:29105"/>
        <note>ligand shared between dimeric partners</note>
    </ligand>
</feature>
<feature type="binding site" evidence="1">
    <location>
        <position position="78"/>
    </location>
    <ligand>
        <name>Mg(2+)</name>
        <dbReference type="ChEBI" id="CHEBI:18420"/>
    </ligand>
</feature>
<feature type="binding site" evidence="1">
    <location>
        <position position="80"/>
    </location>
    <ligand>
        <name>Mg(2+)</name>
        <dbReference type="ChEBI" id="CHEBI:18420"/>
    </ligand>
</feature>
<feature type="binding site" evidence="1">
    <location>
        <position position="93"/>
    </location>
    <ligand>
        <name>Zn(2+)</name>
        <dbReference type="ChEBI" id="CHEBI:29105"/>
        <note>ligand shared between dimeric partners</note>
    </ligand>
</feature>
<feature type="binding site" evidence="1">
    <location>
        <position position="100"/>
    </location>
    <ligand>
        <name>Zn(2+)</name>
        <dbReference type="ChEBI" id="CHEBI:29105"/>
        <note>ligand shared between dimeric partners</note>
    </ligand>
</feature>
<reference key="1">
    <citation type="submission" date="2006-12" db="EMBL/GenBank/DDBJ databases">
        <title>Complete sequence of chromosome 2 of Paracoccus denitrificans PD1222.</title>
        <authorList>
            <person name="Copeland A."/>
            <person name="Lucas S."/>
            <person name="Lapidus A."/>
            <person name="Barry K."/>
            <person name="Detter J.C."/>
            <person name="Glavina del Rio T."/>
            <person name="Hammon N."/>
            <person name="Israni S."/>
            <person name="Dalin E."/>
            <person name="Tice H."/>
            <person name="Pitluck S."/>
            <person name="Munk A.C."/>
            <person name="Brettin T."/>
            <person name="Bruce D."/>
            <person name="Han C."/>
            <person name="Tapia R."/>
            <person name="Gilna P."/>
            <person name="Schmutz J."/>
            <person name="Larimer F."/>
            <person name="Land M."/>
            <person name="Hauser L."/>
            <person name="Kyrpides N."/>
            <person name="Lykidis A."/>
            <person name="Spiro S."/>
            <person name="Richardson D.J."/>
            <person name="Moir J.W.B."/>
            <person name="Ferguson S.J."/>
            <person name="van Spanning R.J.M."/>
            <person name="Richardson P."/>
        </authorList>
    </citation>
    <scope>NUCLEOTIDE SEQUENCE [LARGE SCALE GENOMIC DNA]</scope>
    <source>
        <strain>Pd 1222</strain>
    </source>
</reference>
<keyword id="KW-0028">Amino-acid biosynthesis</keyword>
<keyword id="KW-0963">Cytoplasm</keyword>
<keyword id="KW-0368">Histidine biosynthesis</keyword>
<keyword id="KW-0378">Hydrolase</keyword>
<keyword id="KW-0460">Magnesium</keyword>
<keyword id="KW-0479">Metal-binding</keyword>
<keyword id="KW-1185">Reference proteome</keyword>
<keyword id="KW-0862">Zinc</keyword>
<sequence>MFDTASLKYDANGLIPAIAQDHQSGEVLMMAWMNAEAVRQTLDSGRVTYWSRSRQGFWVKGESSGHVQKLVELRVDCDRDCLLLLVDQTGPACHTNRRSCFYTAIREGQEVVIMAPQNPSA</sequence>
<dbReference type="EC" id="3.5.4.19" evidence="1"/>
<dbReference type="EMBL" id="CP000490">
    <property type="protein sequence ID" value="ABL72146.1"/>
    <property type="molecule type" value="Genomic_DNA"/>
</dbReference>
<dbReference type="RefSeq" id="WP_011750314.1">
    <property type="nucleotide sequence ID" value="NC_008687.1"/>
</dbReference>
<dbReference type="SMR" id="A1B9F2"/>
<dbReference type="STRING" id="318586.Pden_4080"/>
<dbReference type="EnsemblBacteria" id="ABL72146">
    <property type="protein sequence ID" value="ABL72146"/>
    <property type="gene ID" value="Pden_4080"/>
</dbReference>
<dbReference type="GeneID" id="93453745"/>
<dbReference type="KEGG" id="pde:Pden_4080"/>
<dbReference type="eggNOG" id="COG0139">
    <property type="taxonomic scope" value="Bacteria"/>
</dbReference>
<dbReference type="HOGENOM" id="CLU_048577_5_3_5"/>
<dbReference type="OrthoDB" id="9795769at2"/>
<dbReference type="UniPathway" id="UPA00031">
    <property type="reaction ID" value="UER00008"/>
</dbReference>
<dbReference type="Proteomes" id="UP000000361">
    <property type="component" value="Chromosome 2"/>
</dbReference>
<dbReference type="GO" id="GO:0005737">
    <property type="term" value="C:cytoplasm"/>
    <property type="evidence" value="ECO:0007669"/>
    <property type="project" value="UniProtKB-SubCell"/>
</dbReference>
<dbReference type="GO" id="GO:0000287">
    <property type="term" value="F:magnesium ion binding"/>
    <property type="evidence" value="ECO:0007669"/>
    <property type="project" value="UniProtKB-UniRule"/>
</dbReference>
<dbReference type="GO" id="GO:0004635">
    <property type="term" value="F:phosphoribosyl-AMP cyclohydrolase activity"/>
    <property type="evidence" value="ECO:0007669"/>
    <property type="project" value="UniProtKB-UniRule"/>
</dbReference>
<dbReference type="GO" id="GO:0008270">
    <property type="term" value="F:zinc ion binding"/>
    <property type="evidence" value="ECO:0007669"/>
    <property type="project" value="UniProtKB-UniRule"/>
</dbReference>
<dbReference type="GO" id="GO:0000105">
    <property type="term" value="P:L-histidine biosynthetic process"/>
    <property type="evidence" value="ECO:0007669"/>
    <property type="project" value="UniProtKB-UniRule"/>
</dbReference>
<dbReference type="FunFam" id="3.10.20.810:FF:000001">
    <property type="entry name" value="Histidine biosynthesis bifunctional protein HisIE"/>
    <property type="match status" value="1"/>
</dbReference>
<dbReference type="Gene3D" id="3.10.20.810">
    <property type="entry name" value="Phosphoribosyl-AMP cyclohydrolase"/>
    <property type="match status" value="1"/>
</dbReference>
<dbReference type="HAMAP" id="MF_01021">
    <property type="entry name" value="HisI"/>
    <property type="match status" value="1"/>
</dbReference>
<dbReference type="InterPro" id="IPR026660">
    <property type="entry name" value="PRA-CH"/>
</dbReference>
<dbReference type="InterPro" id="IPR002496">
    <property type="entry name" value="PRib_AMP_CycHydrolase_dom"/>
</dbReference>
<dbReference type="InterPro" id="IPR038019">
    <property type="entry name" value="PRib_AMP_CycHydrolase_sf"/>
</dbReference>
<dbReference type="NCBIfam" id="NF000768">
    <property type="entry name" value="PRK00051.1"/>
    <property type="match status" value="1"/>
</dbReference>
<dbReference type="PANTHER" id="PTHR42945">
    <property type="entry name" value="HISTIDINE BIOSYNTHESIS BIFUNCTIONAL PROTEIN"/>
    <property type="match status" value="1"/>
</dbReference>
<dbReference type="PANTHER" id="PTHR42945:SF1">
    <property type="entry name" value="HISTIDINE BIOSYNTHESIS BIFUNCTIONAL PROTEIN HIS7"/>
    <property type="match status" value="1"/>
</dbReference>
<dbReference type="Pfam" id="PF01502">
    <property type="entry name" value="PRA-CH"/>
    <property type="match status" value="1"/>
</dbReference>
<dbReference type="SUPFAM" id="SSF141734">
    <property type="entry name" value="HisI-like"/>
    <property type="match status" value="1"/>
</dbReference>
<evidence type="ECO:0000255" key="1">
    <source>
        <dbReference type="HAMAP-Rule" id="MF_01021"/>
    </source>
</evidence>
<proteinExistence type="inferred from homology"/>